<dbReference type="EMBL" id="CP000247">
    <property type="protein sequence ID" value="ABG71389.1"/>
    <property type="molecule type" value="Genomic_DNA"/>
</dbReference>
<dbReference type="RefSeq" id="WP_001181004.1">
    <property type="nucleotide sequence ID" value="NC_008253.1"/>
</dbReference>
<dbReference type="SMR" id="Q0TCE0"/>
<dbReference type="GeneID" id="93778666"/>
<dbReference type="KEGG" id="ecp:ECP_3409"/>
<dbReference type="HOGENOM" id="CLU_122625_1_3_6"/>
<dbReference type="Proteomes" id="UP000009182">
    <property type="component" value="Chromosome"/>
</dbReference>
<dbReference type="GO" id="GO:1990904">
    <property type="term" value="C:ribonucleoprotein complex"/>
    <property type="evidence" value="ECO:0007669"/>
    <property type="project" value="UniProtKB-KW"/>
</dbReference>
<dbReference type="GO" id="GO:0005840">
    <property type="term" value="C:ribosome"/>
    <property type="evidence" value="ECO:0007669"/>
    <property type="project" value="UniProtKB-KW"/>
</dbReference>
<dbReference type="GO" id="GO:0003735">
    <property type="term" value="F:structural constituent of ribosome"/>
    <property type="evidence" value="ECO:0007669"/>
    <property type="project" value="InterPro"/>
</dbReference>
<dbReference type="GO" id="GO:0000049">
    <property type="term" value="F:tRNA binding"/>
    <property type="evidence" value="ECO:0007669"/>
    <property type="project" value="UniProtKB-UniRule"/>
</dbReference>
<dbReference type="GO" id="GO:0006412">
    <property type="term" value="P:translation"/>
    <property type="evidence" value="ECO:0007669"/>
    <property type="project" value="UniProtKB-UniRule"/>
</dbReference>
<dbReference type="FunFam" id="3.30.70.600:FF:000001">
    <property type="entry name" value="30S ribosomal protein S10"/>
    <property type="match status" value="1"/>
</dbReference>
<dbReference type="Gene3D" id="3.30.70.600">
    <property type="entry name" value="Ribosomal protein S10 domain"/>
    <property type="match status" value="1"/>
</dbReference>
<dbReference type="HAMAP" id="MF_00508">
    <property type="entry name" value="Ribosomal_uS10"/>
    <property type="match status" value="1"/>
</dbReference>
<dbReference type="InterPro" id="IPR001848">
    <property type="entry name" value="Ribosomal_uS10"/>
</dbReference>
<dbReference type="InterPro" id="IPR018268">
    <property type="entry name" value="Ribosomal_uS10_CS"/>
</dbReference>
<dbReference type="InterPro" id="IPR027486">
    <property type="entry name" value="Ribosomal_uS10_dom"/>
</dbReference>
<dbReference type="InterPro" id="IPR036838">
    <property type="entry name" value="Ribosomal_uS10_dom_sf"/>
</dbReference>
<dbReference type="NCBIfam" id="NF001861">
    <property type="entry name" value="PRK00596.1"/>
    <property type="match status" value="1"/>
</dbReference>
<dbReference type="NCBIfam" id="TIGR01049">
    <property type="entry name" value="rpsJ_bact"/>
    <property type="match status" value="1"/>
</dbReference>
<dbReference type="PANTHER" id="PTHR11700">
    <property type="entry name" value="30S RIBOSOMAL PROTEIN S10 FAMILY MEMBER"/>
    <property type="match status" value="1"/>
</dbReference>
<dbReference type="Pfam" id="PF00338">
    <property type="entry name" value="Ribosomal_S10"/>
    <property type="match status" value="1"/>
</dbReference>
<dbReference type="PRINTS" id="PR00971">
    <property type="entry name" value="RIBOSOMALS10"/>
</dbReference>
<dbReference type="SMART" id="SM01403">
    <property type="entry name" value="Ribosomal_S10"/>
    <property type="match status" value="1"/>
</dbReference>
<dbReference type="SUPFAM" id="SSF54999">
    <property type="entry name" value="Ribosomal protein S10"/>
    <property type="match status" value="1"/>
</dbReference>
<dbReference type="PROSITE" id="PS00361">
    <property type="entry name" value="RIBOSOMAL_S10"/>
    <property type="match status" value="1"/>
</dbReference>
<organism>
    <name type="scientific">Escherichia coli O6:K15:H31 (strain 536 / UPEC)</name>
    <dbReference type="NCBI Taxonomy" id="362663"/>
    <lineage>
        <taxon>Bacteria</taxon>
        <taxon>Pseudomonadati</taxon>
        <taxon>Pseudomonadota</taxon>
        <taxon>Gammaproteobacteria</taxon>
        <taxon>Enterobacterales</taxon>
        <taxon>Enterobacteriaceae</taxon>
        <taxon>Escherichia</taxon>
    </lineage>
</organism>
<reference key="1">
    <citation type="journal article" date="2006" name="Mol. Microbiol.">
        <title>Role of pathogenicity island-associated integrases in the genome plasticity of uropathogenic Escherichia coli strain 536.</title>
        <authorList>
            <person name="Hochhut B."/>
            <person name="Wilde C."/>
            <person name="Balling G."/>
            <person name="Middendorf B."/>
            <person name="Dobrindt U."/>
            <person name="Brzuszkiewicz E."/>
            <person name="Gottschalk G."/>
            <person name="Carniel E."/>
            <person name="Hacker J."/>
        </authorList>
    </citation>
    <scope>NUCLEOTIDE SEQUENCE [LARGE SCALE GENOMIC DNA]</scope>
    <source>
        <strain>536 / UPEC</strain>
    </source>
</reference>
<evidence type="ECO:0000255" key="1">
    <source>
        <dbReference type="HAMAP-Rule" id="MF_00508"/>
    </source>
</evidence>
<evidence type="ECO:0000305" key="2"/>
<proteinExistence type="inferred from homology"/>
<keyword id="KW-0687">Ribonucleoprotein</keyword>
<keyword id="KW-0689">Ribosomal protein</keyword>
<sequence length="103" mass="11736">MQNQRIRIRLKAFDHRLIDQATAEIVETAKRTGAQVRGPIPLPTRKERFTVLISPHVNKDARDQYEIRTHLRLVDIVEPTEKTVDALMRLDLAAGVDVQISLG</sequence>
<feature type="chain" id="PRO_0000258549" description="Small ribosomal subunit protein uS10">
    <location>
        <begin position="1"/>
        <end position="103"/>
    </location>
</feature>
<gene>
    <name evidence="1" type="primary">rpsJ</name>
    <name type="ordered locus">ECP_3409</name>
</gene>
<name>RS10_ECOL5</name>
<comment type="function">
    <text evidence="1">Involved in the binding of tRNA to the ribosomes.</text>
</comment>
<comment type="subunit">
    <text evidence="1">Part of the 30S ribosomal subunit.</text>
</comment>
<comment type="similarity">
    <text evidence="1">Belongs to the universal ribosomal protein uS10 family.</text>
</comment>
<protein>
    <recommendedName>
        <fullName evidence="1">Small ribosomal subunit protein uS10</fullName>
    </recommendedName>
    <alternativeName>
        <fullName evidence="2">30S ribosomal protein S10</fullName>
    </alternativeName>
</protein>
<accession>Q0TCE0</accession>